<organism>
    <name type="scientific">Faba bean necrotic yellows virus (isolate Egyptian EV1-93)</name>
    <name type="common">FBNYV</name>
    <dbReference type="NCBI Taxonomy" id="291603"/>
    <lineage>
        <taxon>Viruses</taxon>
        <taxon>Monodnaviria</taxon>
        <taxon>Shotokuvirae</taxon>
        <taxon>Cressdnaviricota</taxon>
        <taxon>Arfiviricetes</taxon>
        <taxon>Mulpavirales</taxon>
        <taxon>Nanoviridae</taxon>
        <taxon>Nanovirus</taxon>
        <taxon>Faba bean necrotic yellows virus</taxon>
    </lineage>
</organism>
<organismHost>
    <name type="scientific">Cicer arietinum</name>
    <name type="common">Chickpea</name>
    <name type="synonym">Garbanzo</name>
    <dbReference type="NCBI Taxonomy" id="3827"/>
</organismHost>
<organismHost>
    <name type="scientific">Lens culinaris</name>
    <name type="common">Lentil</name>
    <name type="synonym">Cicer lens</name>
    <dbReference type="NCBI Taxonomy" id="3864"/>
</organismHost>
<organismHost>
    <name type="scientific">Phaseolus vulgaris</name>
    <name type="common">Kidney bean</name>
    <name type="synonym">French bean</name>
    <dbReference type="NCBI Taxonomy" id="3885"/>
</organismHost>
<organismHost>
    <name type="scientific">Vicia faba</name>
    <name type="common">Broad bean</name>
    <name type="synonym">Faba vulgaris</name>
    <dbReference type="NCBI Taxonomy" id="3906"/>
</organismHost>
<feature type="chain" id="PRO_0000378537" description="Putative movement protein">
    <location>
        <begin position="1"/>
        <end position="114"/>
    </location>
</feature>
<feature type="transmembrane region" description="Helical" evidence="2">
    <location>
        <begin position="27"/>
        <end position="47"/>
    </location>
</feature>
<feature type="region of interest" description="Disordered" evidence="3">
    <location>
        <begin position="79"/>
        <end position="114"/>
    </location>
</feature>
<feature type="compositionally biased region" description="Basic and acidic residues" evidence="3">
    <location>
        <begin position="86"/>
        <end position="97"/>
    </location>
</feature>
<feature type="compositionally biased region" description="Polar residues" evidence="3">
    <location>
        <begin position="98"/>
        <end position="114"/>
    </location>
</feature>
<dbReference type="EMBL" id="AJ132182">
    <property type="protein sequence ID" value="CAB44022.1"/>
    <property type="molecule type" value="Genomic_DNA"/>
</dbReference>
<dbReference type="SMR" id="Q9WIJ7"/>
<dbReference type="KEGG" id="vg:993375"/>
<dbReference type="Proteomes" id="UP001508024">
    <property type="component" value="Genome"/>
</dbReference>
<dbReference type="GO" id="GO:0020002">
    <property type="term" value="C:host cell plasma membrane"/>
    <property type="evidence" value="ECO:0007669"/>
    <property type="project" value="UniProtKB-SubCell"/>
</dbReference>
<dbReference type="GO" id="GO:0016020">
    <property type="term" value="C:membrane"/>
    <property type="evidence" value="ECO:0007669"/>
    <property type="project" value="UniProtKB-KW"/>
</dbReference>
<dbReference type="GO" id="GO:0046740">
    <property type="term" value="P:transport of virus in host, cell to cell"/>
    <property type="evidence" value="ECO:0007669"/>
    <property type="project" value="UniProtKB-KW"/>
</dbReference>
<keyword id="KW-1032">Host cell membrane</keyword>
<keyword id="KW-1043">Host membrane</keyword>
<keyword id="KW-0472">Membrane</keyword>
<keyword id="KW-1185">Reference proteome</keyword>
<keyword id="KW-0812">Transmembrane</keyword>
<keyword id="KW-1133">Transmembrane helix</keyword>
<keyword id="KW-0813">Transport</keyword>
<keyword id="KW-0916">Viral movement protein</keyword>
<gene>
    <name type="primary">DNA-M</name>
    <name type="synonym">C4</name>
</gene>
<sequence length="114" mass="12875">MADTGYYAGYQDDVDVDEQKRHQALYLIGIILLVTVCLTVLWVCIMLACYVPGFLKKTLEAWLNSSSLMKRRVASTLTRTPFEATGPERERNWEARRQSTTVNPASQPNTGSVF</sequence>
<evidence type="ECO:0000250" key="1"/>
<evidence type="ECO:0000255" key="2"/>
<evidence type="ECO:0000256" key="3">
    <source>
        <dbReference type="SAM" id="MobiDB-lite"/>
    </source>
</evidence>
<evidence type="ECO:0000305" key="4"/>
<reference key="1">
    <citation type="journal article" date="1998" name="J. Gen. Virol.">
        <title>Ten distinct circular ssDNA components, four of which encode putative replication-associated proteins, are associated with the faba bean necrotic yellows virus genome.</title>
        <authorList>
            <person name="Katul L."/>
            <person name="Timchenko T."/>
            <person name="Gronenborn B."/>
            <person name="Vetten H.J."/>
        </authorList>
    </citation>
    <scope>NUCLEOTIDE SEQUENCE [GENOMIC DNA]</scope>
</reference>
<proteinExistence type="inferred from homology"/>
<comment type="function">
    <text evidence="1">May transport viral genome to neighboring plant cells directly through plasmosdesmata, without any budding. The movement protein allows efficient cell to cell propagation, by bypassing the host cell wall barrier (By similarity).</text>
</comment>
<comment type="subcellular location">
    <subcellularLocation>
        <location evidence="4">Host cell membrane</location>
        <topology evidence="4">Single-pass membrane protein</topology>
    </subcellularLocation>
    <text evidence="1">The hydrophobic region is responsible for the localization of the protein to the cell periphery.</text>
</comment>
<comment type="similarity">
    <text evidence="4">Belongs to the nanovirus movement protein family.</text>
</comment>
<accession>Q9WIJ7</accession>
<protein>
    <recommendedName>
        <fullName>Putative movement protein</fullName>
        <shortName>MP</shortName>
    </recommendedName>
</protein>
<name>MVP_FBNY1</name>